<dbReference type="EMBL" id="AE005673">
    <property type="protein sequence ID" value="AAK24868.1"/>
    <property type="status" value="ALT_INIT"/>
    <property type="molecule type" value="Genomic_DNA"/>
</dbReference>
<dbReference type="PIR" id="H87608">
    <property type="entry name" value="H87608"/>
</dbReference>
<dbReference type="RefSeq" id="NP_421700.1">
    <property type="nucleotide sequence ID" value="NC_002696.2"/>
</dbReference>
<dbReference type="RefSeq" id="WP_024265874.1">
    <property type="nucleotide sequence ID" value="NC_002696.2"/>
</dbReference>
<dbReference type="SMR" id="Q9A4D0"/>
<dbReference type="STRING" id="190650.CC_2906"/>
<dbReference type="DNASU" id="942830"/>
<dbReference type="EnsemblBacteria" id="AAK24868">
    <property type="protein sequence ID" value="AAK24868"/>
    <property type="gene ID" value="CC_2906"/>
</dbReference>
<dbReference type="KEGG" id="ccr:CC_2906"/>
<dbReference type="PATRIC" id="fig|190650.5.peg.2910"/>
<dbReference type="eggNOG" id="COG3220">
    <property type="taxonomic scope" value="Bacteria"/>
</dbReference>
<dbReference type="HOGENOM" id="CLU_064263_0_0_5"/>
<dbReference type="Proteomes" id="UP000001816">
    <property type="component" value="Chromosome"/>
</dbReference>
<dbReference type="Gene3D" id="3.20.20.150">
    <property type="entry name" value="Divalent-metal-dependent TIM barrel enzymes"/>
    <property type="match status" value="1"/>
</dbReference>
<dbReference type="HAMAP" id="MF_00697">
    <property type="entry name" value="UPF0276"/>
    <property type="match status" value="1"/>
</dbReference>
<dbReference type="InterPro" id="IPR007801">
    <property type="entry name" value="MbnB/TglH/ChrH"/>
</dbReference>
<dbReference type="InterPro" id="IPR036237">
    <property type="entry name" value="Xyl_isomerase-like_sf"/>
</dbReference>
<dbReference type="NCBIfam" id="NF003818">
    <property type="entry name" value="PRK05409.1"/>
    <property type="match status" value="1"/>
</dbReference>
<dbReference type="PANTHER" id="PTHR42194">
    <property type="entry name" value="UPF0276 PROTEIN HI_1600"/>
    <property type="match status" value="1"/>
</dbReference>
<dbReference type="PANTHER" id="PTHR42194:SF1">
    <property type="entry name" value="UPF0276 PROTEIN HI_1600"/>
    <property type="match status" value="1"/>
</dbReference>
<dbReference type="Pfam" id="PF05114">
    <property type="entry name" value="MbnB_TglH_ChrH"/>
    <property type="match status" value="1"/>
</dbReference>
<dbReference type="SUPFAM" id="SSF51658">
    <property type="entry name" value="Xylose isomerase-like"/>
    <property type="match status" value="1"/>
</dbReference>
<proteinExistence type="inferred from homology"/>
<sequence length="280" mass="30866">MTLQPFDGFGLGLRPPHYRAFLDSERPLVDFVEVISENFMVGGGRPLHVIDAVRERYPVALHGVSMSVGSADGVKLDYLRRLKGLADRVDPMWVSDHLCWTGVEGFNSHDLLPVPYTEEAMAVVCANIALAQDVLERPLLLENPSSYVTFANDAMAEHQFLAEMCARTGCYLLLDINNIYVSASNHGFDPYEYLAAVPVDRVLQIHLAGHSQGRELLIDTHDQPVPDSVWALYEAAAGRFGPVAAMIERDDDIPPLDDLLAELDVARARWAAGRRGSLAA</sequence>
<reference key="1">
    <citation type="journal article" date="2001" name="Proc. Natl. Acad. Sci. U.S.A.">
        <title>Complete genome sequence of Caulobacter crescentus.</title>
        <authorList>
            <person name="Nierman W.C."/>
            <person name="Feldblyum T.V."/>
            <person name="Laub M.T."/>
            <person name="Paulsen I.T."/>
            <person name="Nelson K.E."/>
            <person name="Eisen J.A."/>
            <person name="Heidelberg J.F."/>
            <person name="Alley M.R.K."/>
            <person name="Ohta N."/>
            <person name="Maddock J.R."/>
            <person name="Potocka I."/>
            <person name="Nelson W.C."/>
            <person name="Newton A."/>
            <person name="Stephens C."/>
            <person name="Phadke N.D."/>
            <person name="Ely B."/>
            <person name="DeBoy R.T."/>
            <person name="Dodson R.J."/>
            <person name="Durkin A.S."/>
            <person name="Gwinn M.L."/>
            <person name="Haft D.H."/>
            <person name="Kolonay J.F."/>
            <person name="Smit J."/>
            <person name="Craven M.B."/>
            <person name="Khouri H.M."/>
            <person name="Shetty J."/>
            <person name="Berry K.J."/>
            <person name="Utterback T.R."/>
            <person name="Tran K."/>
            <person name="Wolf A.M."/>
            <person name="Vamathevan J.J."/>
            <person name="Ermolaeva M.D."/>
            <person name="White O."/>
            <person name="Salzberg S.L."/>
            <person name="Venter J.C."/>
            <person name="Shapiro L."/>
            <person name="Fraser C.M."/>
        </authorList>
    </citation>
    <scope>NUCLEOTIDE SEQUENCE [LARGE SCALE GENOMIC DNA]</scope>
    <source>
        <strain>ATCC 19089 / CIP 103742 / CB 15</strain>
    </source>
</reference>
<comment type="similarity">
    <text evidence="1">Belongs to the UPF0276 family.</text>
</comment>
<comment type="sequence caution" evidence="2">
    <conflict type="erroneous initiation">
        <sequence resource="EMBL-CDS" id="AAK24868"/>
    </conflict>
</comment>
<accession>Q9A4D0</accession>
<evidence type="ECO:0000255" key="1">
    <source>
        <dbReference type="HAMAP-Rule" id="MF_00697"/>
    </source>
</evidence>
<evidence type="ECO:0000305" key="2"/>
<feature type="chain" id="PRO_0000192693" description="UPF0276 protein CC_2906">
    <location>
        <begin position="1"/>
        <end position="280"/>
    </location>
</feature>
<name>Y2906_CAUVC</name>
<protein>
    <recommendedName>
        <fullName evidence="1">UPF0276 protein CC_2906</fullName>
    </recommendedName>
</protein>
<gene>
    <name type="ordered locus">CC_2906</name>
</gene>
<organism>
    <name type="scientific">Caulobacter vibrioides (strain ATCC 19089 / CIP 103742 / CB 15)</name>
    <name type="common">Caulobacter crescentus</name>
    <dbReference type="NCBI Taxonomy" id="190650"/>
    <lineage>
        <taxon>Bacteria</taxon>
        <taxon>Pseudomonadati</taxon>
        <taxon>Pseudomonadota</taxon>
        <taxon>Alphaproteobacteria</taxon>
        <taxon>Caulobacterales</taxon>
        <taxon>Caulobacteraceae</taxon>
        <taxon>Caulobacter</taxon>
    </lineage>
</organism>
<keyword id="KW-1185">Reference proteome</keyword>